<sequence length="465" mass="52598">MTDSIMQNYNQLREQVINGDRRFQHKDGHLCFEGVDLDALARQYPTPFYVFSEPEIIRNIHEIQQAFAAHKNTKTFFASKTCSVMGVLKAIRDAGICAEANSQYEVRKCLEIGFRGDQIVFNGVVKKPADLEYAIANDLYLINVDSLYELEHIDAISRKLKKVANVCVRVEPNVPSATHAELVTAFHAKSGLDLEQAEETCRRILAMPYVHLRGLHMHVGDQVPESEPFAKATKVLVDESRRLEEVLGIKFDLINVGGGIPVPYKYDDENGDPLKDNMYAGITAQDFADAVIREVHKWRTDVEICIEPGRKVTGSAAVLLTEVSCEKRKTNYDLNGNVECHVEWKFVDAGYSVLSDSQHFDWFFYVYNASRMTAAHDAWIKLAGPLCDGGDYFHMGVKGEEFLLPKETHVGDIVAFLDAGAYTIESQTVYNNRPRTGVVMIDKNGDTRLIRREDSYEDMVKYDIY</sequence>
<dbReference type="EC" id="4.1.1.116" evidence="2"/>
<dbReference type="EMBL" id="AE006468">
    <property type="protein sequence ID" value="AAL21261.1"/>
    <property type="molecule type" value="Genomic_DNA"/>
</dbReference>
<dbReference type="RefSeq" id="NP_461302.1">
    <property type="nucleotide sequence ID" value="NC_003197.2"/>
</dbReference>
<dbReference type="RefSeq" id="WP_000132305.1">
    <property type="nucleotide sequence ID" value="NC_003197.2"/>
</dbReference>
<dbReference type="PDB" id="6N2H">
    <property type="method" value="X-ray"/>
    <property type="resolution" value="1.72 A"/>
    <property type="chains" value="A=1-465"/>
</dbReference>
<dbReference type="PDB" id="8D2Y">
    <property type="method" value="X-ray"/>
    <property type="resolution" value="1.22 A"/>
    <property type="chains" value="A=1-465"/>
</dbReference>
<dbReference type="PDB" id="8D4I">
    <property type="method" value="X-ray"/>
    <property type="resolution" value="1.32 A"/>
    <property type="chains" value="A/C=1-465"/>
</dbReference>
<dbReference type="PDB" id="8D5D">
    <property type="method" value="X-ray"/>
    <property type="resolution" value="1.54 A"/>
    <property type="chains" value="A/B=1-465"/>
</dbReference>
<dbReference type="PDB" id="8D5R">
    <property type="method" value="X-ray"/>
    <property type="resolution" value="1.44 A"/>
    <property type="chains" value="A/B=1-465"/>
</dbReference>
<dbReference type="PDB" id="8D88">
    <property type="method" value="X-ray"/>
    <property type="resolution" value="1.41 A"/>
    <property type="chains" value="A/B=1-465"/>
</dbReference>
<dbReference type="PDBsum" id="6N2H"/>
<dbReference type="PDBsum" id="8D2Y"/>
<dbReference type="PDBsum" id="8D4I"/>
<dbReference type="PDBsum" id="8D5D"/>
<dbReference type="PDBsum" id="8D5R"/>
<dbReference type="PDBsum" id="8D88"/>
<dbReference type="SMR" id="Q8ZNC4"/>
<dbReference type="STRING" id="99287.STM2360"/>
<dbReference type="PaxDb" id="99287-STM2360"/>
<dbReference type="GeneID" id="1253882"/>
<dbReference type="KEGG" id="stm:STM2360"/>
<dbReference type="PATRIC" id="fig|99287.12.peg.2498"/>
<dbReference type="HOGENOM" id="CLU_026444_0_0_6"/>
<dbReference type="OMA" id="AYCRSMA"/>
<dbReference type="PhylomeDB" id="Q8ZNC4"/>
<dbReference type="BioCyc" id="MetaCyc:STM2360-MONOMER"/>
<dbReference type="BioCyc" id="SENT99287:STM2360-MONOMER"/>
<dbReference type="BRENDA" id="4.1.1.116">
    <property type="organism ID" value="5542"/>
</dbReference>
<dbReference type="Proteomes" id="UP000001014">
    <property type="component" value="Chromosome"/>
</dbReference>
<dbReference type="GO" id="GO:0008836">
    <property type="term" value="F:diaminopimelate decarboxylase activity"/>
    <property type="evidence" value="ECO:0000318"/>
    <property type="project" value="GO_Central"/>
</dbReference>
<dbReference type="GO" id="GO:0009089">
    <property type="term" value="P:lysine biosynthetic process via diaminopimelate"/>
    <property type="evidence" value="ECO:0000318"/>
    <property type="project" value="GO_Central"/>
</dbReference>
<dbReference type="FunFam" id="3.20.20.10:FF:000015">
    <property type="entry name" value="Diaminopimelate decarboxylase"/>
    <property type="match status" value="1"/>
</dbReference>
<dbReference type="Gene3D" id="3.20.20.10">
    <property type="entry name" value="Alanine racemase"/>
    <property type="match status" value="1"/>
</dbReference>
<dbReference type="Gene3D" id="2.40.37.10">
    <property type="entry name" value="Lyase, Ornithine Decarboxylase, Chain A, domain 1"/>
    <property type="match status" value="1"/>
</dbReference>
<dbReference type="InterPro" id="IPR009006">
    <property type="entry name" value="Ala_racemase/Decarboxylase_C"/>
</dbReference>
<dbReference type="InterPro" id="IPR022643">
    <property type="entry name" value="De-COase2_C"/>
</dbReference>
<dbReference type="InterPro" id="IPR022644">
    <property type="entry name" value="De-COase2_N"/>
</dbReference>
<dbReference type="InterPro" id="IPR000183">
    <property type="entry name" value="Orn/DAP/Arg_de-COase"/>
</dbReference>
<dbReference type="InterPro" id="IPR029066">
    <property type="entry name" value="PLP-binding_barrel"/>
</dbReference>
<dbReference type="PANTHER" id="PTHR43727">
    <property type="entry name" value="DIAMINOPIMELATE DECARBOXYLASE"/>
    <property type="match status" value="1"/>
</dbReference>
<dbReference type="PANTHER" id="PTHR43727:SF2">
    <property type="entry name" value="GROUP IV DECARBOXYLASE"/>
    <property type="match status" value="1"/>
</dbReference>
<dbReference type="Pfam" id="PF02784">
    <property type="entry name" value="Orn_Arg_deC_N"/>
    <property type="match status" value="1"/>
</dbReference>
<dbReference type="Pfam" id="PF00278">
    <property type="entry name" value="Orn_DAP_Arg_deC"/>
    <property type="match status" value="1"/>
</dbReference>
<dbReference type="PRINTS" id="PR01179">
    <property type="entry name" value="ODADCRBXLASE"/>
</dbReference>
<dbReference type="SUPFAM" id="SSF50621">
    <property type="entry name" value="Alanine racemase C-terminal domain-like"/>
    <property type="match status" value="1"/>
</dbReference>
<dbReference type="SUPFAM" id="SSF51419">
    <property type="entry name" value="PLP-binding barrel"/>
    <property type="match status" value="1"/>
</dbReference>
<comment type="function">
    <text evidence="2 3">Catalyzes the decarboxylation of D-ornithine and D-lysine (PubMed:29024617, PubMed:30699288). Ornithine is likely the physiological substrate (PubMed:29024617). Has no detectable diaminopimelate decarboxylase activity in vitro (PubMed:29024617).</text>
</comment>
<comment type="catalytic activity">
    <reaction evidence="2 3">
        <text>D-ornithine + H(+) = putrescine + CO2</text>
        <dbReference type="Rhea" id="RHEA:59048"/>
        <dbReference type="ChEBI" id="CHEBI:15378"/>
        <dbReference type="ChEBI" id="CHEBI:16526"/>
        <dbReference type="ChEBI" id="CHEBI:57668"/>
        <dbReference type="ChEBI" id="CHEBI:326268"/>
        <dbReference type="EC" id="4.1.1.116"/>
    </reaction>
</comment>
<comment type="catalytic activity">
    <reaction evidence="2 3">
        <text>D-lysine + H(+) = cadaverine + CO2</text>
        <dbReference type="Rhea" id="RHEA:59052"/>
        <dbReference type="ChEBI" id="CHEBI:15378"/>
        <dbReference type="ChEBI" id="CHEBI:16526"/>
        <dbReference type="ChEBI" id="CHEBI:32557"/>
        <dbReference type="ChEBI" id="CHEBI:58384"/>
        <dbReference type="EC" id="4.1.1.116"/>
    </reaction>
</comment>
<comment type="cofactor">
    <cofactor evidence="2">
        <name>pyridoxal 5'-phosphate</name>
        <dbReference type="ChEBI" id="CHEBI:597326"/>
    </cofactor>
</comment>
<comment type="biophysicochemical properties">
    <kinetics>
        <text evidence="2">kcat is 1.8 sec(-1) with D-ornithine as substrate. kcat is 4.4 sec(-1) with D-lysine as substrate.</text>
    </kinetics>
    <phDependence>
        <text evidence="2">Optimum pH is 6.5-8.</text>
    </phDependence>
</comment>
<comment type="subunit">
    <text evidence="3">Homodimer.</text>
</comment>
<comment type="similarity">
    <text evidence="5">Belongs to the Orn/Lys/Arg decarboxylase class-II family.</text>
</comment>
<organism>
    <name type="scientific">Salmonella typhimurium (strain LT2 / SGSC1412 / ATCC 700720)</name>
    <dbReference type="NCBI Taxonomy" id="99287"/>
    <lineage>
        <taxon>Bacteria</taxon>
        <taxon>Pseudomonadati</taxon>
        <taxon>Pseudomonadota</taxon>
        <taxon>Gammaproteobacteria</taxon>
        <taxon>Enterobacterales</taxon>
        <taxon>Enterobacteriaceae</taxon>
        <taxon>Salmonella</taxon>
    </lineage>
</organism>
<protein>
    <recommendedName>
        <fullName evidence="4">D-ornithine/D-lysine decarboxylase</fullName>
        <shortName evidence="4">D-Orn/D-Lys decarboxylase</shortName>
        <shortName evidence="4">DOKDC</shortName>
        <ecNumber evidence="2">4.1.1.116</ecNumber>
    </recommendedName>
</protein>
<reference key="1">
    <citation type="journal article" date="2001" name="Nature">
        <title>Complete genome sequence of Salmonella enterica serovar Typhimurium LT2.</title>
        <authorList>
            <person name="McClelland M."/>
            <person name="Sanderson K.E."/>
            <person name="Spieth J."/>
            <person name="Clifton S.W."/>
            <person name="Latreille P."/>
            <person name="Courtney L."/>
            <person name="Porwollik S."/>
            <person name="Ali J."/>
            <person name="Dante M."/>
            <person name="Du F."/>
            <person name="Hou S."/>
            <person name="Layman D."/>
            <person name="Leonard S."/>
            <person name="Nguyen C."/>
            <person name="Scott K."/>
            <person name="Holmes A."/>
            <person name="Grewal N."/>
            <person name="Mulvaney E."/>
            <person name="Ryan E."/>
            <person name="Sun H."/>
            <person name="Florea L."/>
            <person name="Miller W."/>
            <person name="Stoneking T."/>
            <person name="Nhan M."/>
            <person name="Waterston R."/>
            <person name="Wilson R.K."/>
        </authorList>
    </citation>
    <scope>NUCLEOTIDE SEQUENCE [LARGE SCALE GENOMIC DNA]</scope>
    <source>
        <strain>LT2 / SGSC1412 / ATCC 700720</strain>
    </source>
</reference>
<reference key="2">
    <citation type="journal article" date="2017" name="Arch. Biochem. Biophys.">
        <title>STM2360 encodes a D-ornithine/D-lysine decarboxylase in Salmonella enterica serovar typhimurium.</title>
        <authorList>
            <person name="Phillips R.S."/>
            <person name="Poteh P."/>
            <person name="Miller K.A."/>
            <person name="Hoover T.R."/>
        </authorList>
    </citation>
    <scope>FUNCTION</scope>
    <scope>CATALYTIC ACTIVITY</scope>
    <scope>COFACTOR</scope>
    <scope>BIOPHYSICOCHEMICAL PROPERTIES</scope>
    <source>
        <strain>LT2</strain>
    </source>
</reference>
<reference evidence="7" key="3">
    <citation type="journal article" date="2019" name="Biochemistry">
        <title>Crystal structure of D-ornithine/D-lysine decarboxylase, a stereoinverting decarboxylase: implications for substrate specificity and stereospecificity of fold III decarboxylases.</title>
        <authorList>
            <person name="Phillips R.S."/>
            <person name="Poteh P."/>
            <person name="Krajcovic D."/>
            <person name="Miller K.A."/>
            <person name="Hoover T.R."/>
        </authorList>
    </citation>
    <scope>X-RAY CRYSTALLOGRAPHY (1.72 ANGSTROMS)</scope>
    <scope>FUNCTION</scope>
    <scope>CATALYTIC ACTIVITY</scope>
    <scope>REACTION MECHANISM</scope>
    <scope>SUBUNIT</scope>
</reference>
<keyword id="KW-0002">3D-structure</keyword>
<keyword id="KW-0210">Decarboxylase</keyword>
<keyword id="KW-0456">Lyase</keyword>
<keyword id="KW-0663">Pyridoxal phosphate</keyword>
<keyword id="KW-1185">Reference proteome</keyword>
<name>DOKDC_SALTY</name>
<gene>
    <name evidence="4" type="primary">dokD</name>
    <name evidence="6" type="ordered locus">STM2360</name>
</gene>
<feature type="chain" id="PRO_0000451594" description="D-ornithine/D-lysine decarboxylase">
    <location>
        <begin position="1"/>
        <end position="465"/>
    </location>
</feature>
<feature type="active site" description="Proton donor" evidence="1">
    <location>
        <position position="387"/>
    </location>
</feature>
<feature type="binding site" evidence="1">
    <location>
        <position position="259"/>
    </location>
    <ligand>
        <name>pyridoxal 5'-phosphate</name>
        <dbReference type="ChEBI" id="CHEBI:597326"/>
    </ligand>
</feature>
<feature type="binding site" evidence="1">
    <location>
        <begin position="307"/>
        <end position="310"/>
    </location>
    <ligand>
        <name>pyridoxal 5'-phosphate</name>
        <dbReference type="ChEBI" id="CHEBI:597326"/>
    </ligand>
</feature>
<feature type="binding site" evidence="1">
    <location>
        <position position="422"/>
    </location>
    <ligand>
        <name>pyridoxal 5'-phosphate</name>
        <dbReference type="ChEBI" id="CHEBI:597326"/>
    </ligand>
</feature>
<feature type="modified residue" description="N6-(pyridoxal phosphate)lysine" evidence="1">
    <location>
        <position position="80"/>
    </location>
</feature>
<feature type="helix" evidence="8">
    <location>
        <begin position="2"/>
        <end position="19"/>
    </location>
</feature>
<feature type="strand" evidence="8">
    <location>
        <begin position="23"/>
        <end position="26"/>
    </location>
</feature>
<feature type="strand" evidence="8">
    <location>
        <begin position="29"/>
        <end position="32"/>
    </location>
</feature>
<feature type="helix" evidence="8">
    <location>
        <begin position="37"/>
        <end position="43"/>
    </location>
</feature>
<feature type="strand" evidence="8">
    <location>
        <begin position="46"/>
        <end position="52"/>
    </location>
</feature>
<feature type="helix" evidence="8">
    <location>
        <begin position="53"/>
        <end position="66"/>
    </location>
</feature>
<feature type="turn" evidence="8">
    <location>
        <begin position="67"/>
        <end position="69"/>
    </location>
</feature>
<feature type="strand" evidence="8">
    <location>
        <begin position="71"/>
        <end position="78"/>
    </location>
</feature>
<feature type="helix" evidence="9">
    <location>
        <begin position="79"/>
        <end position="81"/>
    </location>
</feature>
<feature type="helix" evidence="8">
    <location>
        <begin position="85"/>
        <end position="93"/>
    </location>
</feature>
<feature type="strand" evidence="8">
    <location>
        <begin position="97"/>
        <end position="102"/>
    </location>
</feature>
<feature type="helix" evidence="8">
    <location>
        <begin position="103"/>
        <end position="112"/>
    </location>
</feature>
<feature type="helix" evidence="8">
    <location>
        <begin position="116"/>
        <end position="118"/>
    </location>
</feature>
<feature type="strand" evidence="8">
    <location>
        <begin position="119"/>
        <end position="121"/>
    </location>
</feature>
<feature type="helix" evidence="8">
    <location>
        <begin position="128"/>
        <end position="136"/>
    </location>
</feature>
<feature type="strand" evidence="8">
    <location>
        <begin position="140"/>
        <end position="144"/>
    </location>
</feature>
<feature type="helix" evidence="8">
    <location>
        <begin position="147"/>
        <end position="160"/>
    </location>
</feature>
<feature type="strand" evidence="8">
    <location>
        <begin position="164"/>
        <end position="170"/>
    </location>
</feature>
<feature type="helix" evidence="8">
    <location>
        <begin position="184"/>
        <end position="187"/>
    </location>
</feature>
<feature type="strand" evidence="8">
    <location>
        <begin position="190"/>
        <end position="192"/>
    </location>
</feature>
<feature type="helix" evidence="8">
    <location>
        <begin position="194"/>
        <end position="196"/>
    </location>
</feature>
<feature type="helix" evidence="8">
    <location>
        <begin position="197"/>
        <end position="206"/>
    </location>
</feature>
<feature type="strand" evidence="8">
    <location>
        <begin position="210"/>
        <end position="216"/>
    </location>
</feature>
<feature type="helix" evidence="8">
    <location>
        <begin position="227"/>
        <end position="247"/>
    </location>
</feature>
<feature type="strand" evidence="8">
    <location>
        <begin position="252"/>
        <end position="255"/>
    </location>
</feature>
<feature type="helix" evidence="8">
    <location>
        <begin position="268"/>
        <end position="270"/>
    </location>
</feature>
<feature type="turn" evidence="8">
    <location>
        <begin position="273"/>
        <end position="275"/>
    </location>
</feature>
<feature type="helix" evidence="8">
    <location>
        <begin position="284"/>
        <end position="296"/>
    </location>
</feature>
<feature type="strand" evidence="8">
    <location>
        <begin position="300"/>
        <end position="306"/>
    </location>
</feature>
<feature type="helix" evidence="8">
    <location>
        <begin position="310"/>
        <end position="313"/>
    </location>
</feature>
<feature type="helix" evidence="8">
    <location>
        <begin position="314"/>
        <end position="316"/>
    </location>
</feature>
<feature type="strand" evidence="8">
    <location>
        <begin position="317"/>
        <end position="332"/>
    </location>
</feature>
<feature type="strand" evidence="8">
    <location>
        <begin position="338"/>
        <end position="348"/>
    </location>
</feature>
<feature type="turn" evidence="8">
    <location>
        <begin position="351"/>
        <end position="353"/>
    </location>
</feature>
<feature type="helix" evidence="8">
    <location>
        <begin position="356"/>
        <end position="359"/>
    </location>
</feature>
<feature type="strand" evidence="8">
    <location>
        <begin position="366"/>
        <end position="368"/>
    </location>
</feature>
<feature type="helix" evidence="8">
    <location>
        <begin position="369"/>
        <end position="371"/>
    </location>
</feature>
<feature type="strand" evidence="8">
    <location>
        <begin position="378"/>
        <end position="383"/>
    </location>
</feature>
<feature type="strand" evidence="8">
    <location>
        <begin position="385"/>
        <end position="388"/>
    </location>
</feature>
<feature type="strand" evidence="8">
    <location>
        <begin position="401"/>
        <end position="404"/>
    </location>
</feature>
<feature type="strand" evidence="8">
    <location>
        <begin position="413"/>
        <end position="418"/>
    </location>
</feature>
<feature type="helix" evidence="8">
    <location>
        <begin position="430"/>
        <end position="432"/>
    </location>
</feature>
<feature type="strand" evidence="8">
    <location>
        <begin position="437"/>
        <end position="441"/>
    </location>
</feature>
<feature type="strand" evidence="8">
    <location>
        <begin position="447"/>
        <end position="451"/>
    </location>
</feature>
<feature type="helix" evidence="8">
    <location>
        <begin position="456"/>
        <end position="461"/>
    </location>
</feature>
<proteinExistence type="evidence at protein level"/>
<evidence type="ECO:0000250" key="1">
    <source>
        <dbReference type="UniProtKB" id="B4XMC6"/>
    </source>
</evidence>
<evidence type="ECO:0000269" key="2">
    <source>
    </source>
</evidence>
<evidence type="ECO:0000269" key="3">
    <source>
    </source>
</evidence>
<evidence type="ECO:0000303" key="4">
    <source>
    </source>
</evidence>
<evidence type="ECO:0000305" key="5"/>
<evidence type="ECO:0000312" key="6">
    <source>
        <dbReference type="EMBL" id="AAL21261.1"/>
    </source>
</evidence>
<evidence type="ECO:0007744" key="7">
    <source>
        <dbReference type="PDB" id="6N2H"/>
    </source>
</evidence>
<evidence type="ECO:0007829" key="8">
    <source>
        <dbReference type="PDB" id="8D2Y"/>
    </source>
</evidence>
<evidence type="ECO:0007829" key="9">
    <source>
        <dbReference type="PDB" id="8D88"/>
    </source>
</evidence>
<accession>Q8ZNC4</accession>